<accession>Q7M8H7</accession>
<reference key="1">
    <citation type="journal article" date="2003" name="Proc. Natl. Acad. Sci. U.S.A.">
        <title>Complete genome sequence and analysis of Wolinella succinogenes.</title>
        <authorList>
            <person name="Baar C."/>
            <person name="Eppinger M."/>
            <person name="Raddatz G."/>
            <person name="Simon J."/>
            <person name="Lanz C."/>
            <person name="Klimmek O."/>
            <person name="Nandakumar R."/>
            <person name="Gross R."/>
            <person name="Rosinus A."/>
            <person name="Keller H."/>
            <person name="Jagtap P."/>
            <person name="Linke B."/>
            <person name="Meyer F."/>
            <person name="Lederer H."/>
            <person name="Schuster S.C."/>
        </authorList>
    </citation>
    <scope>NUCLEOTIDE SEQUENCE [LARGE SCALE GENOMIC DNA]</scope>
    <source>
        <strain>ATCC 29543 / DSM 1740 / CCUG 13145 / JCM 31913 / LMG 7466 / NCTC 11488 / FDC 602W</strain>
    </source>
</reference>
<comment type="function">
    <text evidence="1">Catalyzes the attachment of valine to tRNA(Val). As ValRS can inadvertently accommodate and process structurally similar amino acids such as threonine, to avoid such errors, it has a 'posttransfer' editing activity that hydrolyzes mischarged Thr-tRNA(Val) in a tRNA-dependent manner.</text>
</comment>
<comment type="catalytic activity">
    <reaction evidence="1">
        <text>tRNA(Val) + L-valine + ATP = L-valyl-tRNA(Val) + AMP + diphosphate</text>
        <dbReference type="Rhea" id="RHEA:10704"/>
        <dbReference type="Rhea" id="RHEA-COMP:9672"/>
        <dbReference type="Rhea" id="RHEA-COMP:9708"/>
        <dbReference type="ChEBI" id="CHEBI:30616"/>
        <dbReference type="ChEBI" id="CHEBI:33019"/>
        <dbReference type="ChEBI" id="CHEBI:57762"/>
        <dbReference type="ChEBI" id="CHEBI:78442"/>
        <dbReference type="ChEBI" id="CHEBI:78537"/>
        <dbReference type="ChEBI" id="CHEBI:456215"/>
        <dbReference type="EC" id="6.1.1.9"/>
    </reaction>
</comment>
<comment type="subunit">
    <text evidence="1">Monomer.</text>
</comment>
<comment type="subcellular location">
    <subcellularLocation>
        <location evidence="1">Cytoplasm</location>
    </subcellularLocation>
</comment>
<comment type="domain">
    <text evidence="1">ValRS has two distinct active sites: one for aminoacylation and one for editing. The misactivated threonine is translocated from the active site to the editing site.</text>
</comment>
<comment type="domain">
    <text evidence="1">The C-terminal coiled-coil domain is crucial for aminoacylation activity.</text>
</comment>
<comment type="similarity">
    <text evidence="1">Belongs to the class-I aminoacyl-tRNA synthetase family. ValS type 1 subfamily.</text>
</comment>
<gene>
    <name evidence="1" type="primary">valS</name>
    <name type="ordered locus">WS1652</name>
</gene>
<feature type="chain" id="PRO_0000224597" description="Valine--tRNA ligase">
    <location>
        <begin position="1"/>
        <end position="894"/>
    </location>
</feature>
<feature type="region of interest" description="Disordered" evidence="2">
    <location>
        <begin position="1"/>
        <end position="28"/>
    </location>
</feature>
<feature type="coiled-coil region" evidence="1">
    <location>
        <begin position="832"/>
        <end position="894"/>
    </location>
</feature>
<feature type="short sequence motif" description="'HIGH' region">
    <location>
        <begin position="69"/>
        <end position="79"/>
    </location>
</feature>
<feature type="short sequence motif" description="'KMSKS' region">
    <location>
        <begin position="554"/>
        <end position="558"/>
    </location>
</feature>
<feature type="compositionally biased region" description="Polar residues" evidence="2">
    <location>
        <begin position="1"/>
        <end position="22"/>
    </location>
</feature>
<feature type="binding site" evidence="1">
    <location>
        <position position="557"/>
    </location>
    <ligand>
        <name>ATP</name>
        <dbReference type="ChEBI" id="CHEBI:30616"/>
    </ligand>
</feature>
<keyword id="KW-0030">Aminoacyl-tRNA synthetase</keyword>
<keyword id="KW-0067">ATP-binding</keyword>
<keyword id="KW-0175">Coiled coil</keyword>
<keyword id="KW-0963">Cytoplasm</keyword>
<keyword id="KW-0436">Ligase</keyword>
<keyword id="KW-0547">Nucleotide-binding</keyword>
<keyword id="KW-0648">Protein biosynthesis</keyword>
<keyword id="KW-1185">Reference proteome</keyword>
<protein>
    <recommendedName>
        <fullName evidence="1">Valine--tRNA ligase</fullName>
        <ecNumber evidence="1">6.1.1.9</ecNumber>
    </recommendedName>
    <alternativeName>
        <fullName evidence="1">Valyl-tRNA synthetase</fullName>
        <shortName evidence="1">ValRS</shortName>
    </alternativeName>
</protein>
<proteinExistence type="inferred from homology"/>
<evidence type="ECO:0000255" key="1">
    <source>
        <dbReference type="HAMAP-Rule" id="MF_02004"/>
    </source>
</evidence>
<evidence type="ECO:0000256" key="2">
    <source>
        <dbReference type="SAM" id="MobiDB-lite"/>
    </source>
</evidence>
<name>SYV_WOLSU</name>
<organism>
    <name type="scientific">Wolinella succinogenes (strain ATCC 29543 / DSM 1740 / CCUG 13145 / JCM 31913 / LMG 7466 / NCTC 11488 / FDC 602W)</name>
    <name type="common">Vibrio succinogenes</name>
    <dbReference type="NCBI Taxonomy" id="273121"/>
    <lineage>
        <taxon>Bacteria</taxon>
        <taxon>Pseudomonadati</taxon>
        <taxon>Campylobacterota</taxon>
        <taxon>Epsilonproteobacteria</taxon>
        <taxon>Campylobacterales</taxon>
        <taxon>Helicobacteraceae</taxon>
        <taxon>Wolinella</taxon>
    </lineage>
</organism>
<sequence length="894" mass="102730">MKSIQTPSKSHTNTKETPVMSQEETKGYNPREIEESYYKIWETRGYFEVEGNAQIQKPNQNFAVMLPPPNVTGSLHIGHALNHTLIDIMTRYKRMDGYKTLWQPGTDHAGIATQNVVEKRLLSKGIKKEELGREAFLEKVWEWREESGGTILSQMRKLGTSPAWSRTRFTMDEGLKNSVARAFVKLYEEGYIIRGNYMVNWCTHDGALSDIEVEYDANKGKLYHLRYFFKDSSDYIVVATTRPETFFGDTAVMVHPEDERYAHLIGQTLVLPLIGREIQIIADSYVDREFGTGMVKVTPAHDPNDYEVGKRHDLEFITVFDKEGYLNHHAGEFEGLERLEAREAIVAKLQEKGYIEKIEEHENQVGKCYRCGNVVEPYISKQWFVKKEVAQKAIERINSGEAAFYPAQWKNNYNAWMKELRDWCISRQLWWGHQIPVYYCDCGHEWASETTPSHCPKCQGSQFHQDPDVLDTWFSSALWPFSTLGWGNGEAGKGSWWREEDLQEFYPNSLLITGFDILFFWVARMLMMGEHFLDNLPFKDIYLHALVRDEKGQKMSKSKGNVIDPLELIEKYGCDSTRFTLAILCAQGRDVRLSSQQLEISKNFTNKLYNAANFLLLNASSFKTLDEITPQTPLGRYMASRFSLCVEELRGALDGYRFNDGATVLYRFLWGEFCDWGIELSKANKEAINELGAIFREAMKLLHPYMPFISEHLYQKLGGARLEESTSIMILPYPKANWREEKIEMTFEVIMDAIISTRRLKATLELANQKIPVVFIKAPQGMDESLINTFIPRLAKVDSIELLSEKPAACVVDVGEKCEIYLSTAQLDLSPIISRLEKQQEKLQKEVDKLLGMLNNEKFVANAPQNVLEQNRVALKEAQTKLDKVKVELQGIKG</sequence>
<dbReference type="EC" id="6.1.1.9" evidence="1"/>
<dbReference type="EMBL" id="BX571661">
    <property type="protein sequence ID" value="CAE10683.1"/>
    <property type="molecule type" value="Genomic_DNA"/>
</dbReference>
<dbReference type="SMR" id="Q7M8H7"/>
<dbReference type="STRING" id="273121.WS1652"/>
<dbReference type="KEGG" id="wsu:WS1652"/>
<dbReference type="eggNOG" id="COG0525">
    <property type="taxonomic scope" value="Bacteria"/>
</dbReference>
<dbReference type="HOGENOM" id="CLU_001493_0_2_7"/>
<dbReference type="Proteomes" id="UP000000422">
    <property type="component" value="Chromosome"/>
</dbReference>
<dbReference type="GO" id="GO:0005829">
    <property type="term" value="C:cytosol"/>
    <property type="evidence" value="ECO:0007669"/>
    <property type="project" value="TreeGrafter"/>
</dbReference>
<dbReference type="GO" id="GO:0002161">
    <property type="term" value="F:aminoacyl-tRNA deacylase activity"/>
    <property type="evidence" value="ECO:0007669"/>
    <property type="project" value="InterPro"/>
</dbReference>
<dbReference type="GO" id="GO:0005524">
    <property type="term" value="F:ATP binding"/>
    <property type="evidence" value="ECO:0007669"/>
    <property type="project" value="UniProtKB-UniRule"/>
</dbReference>
<dbReference type="GO" id="GO:0004832">
    <property type="term" value="F:valine-tRNA ligase activity"/>
    <property type="evidence" value="ECO:0007669"/>
    <property type="project" value="UniProtKB-UniRule"/>
</dbReference>
<dbReference type="GO" id="GO:0006438">
    <property type="term" value="P:valyl-tRNA aminoacylation"/>
    <property type="evidence" value="ECO:0007669"/>
    <property type="project" value="UniProtKB-UniRule"/>
</dbReference>
<dbReference type="CDD" id="cd07962">
    <property type="entry name" value="Anticodon_Ia_Val"/>
    <property type="match status" value="1"/>
</dbReference>
<dbReference type="CDD" id="cd00817">
    <property type="entry name" value="ValRS_core"/>
    <property type="match status" value="1"/>
</dbReference>
<dbReference type="FunFam" id="3.40.50.620:FF:000382">
    <property type="entry name" value="Valine--tRNA ligase"/>
    <property type="match status" value="1"/>
</dbReference>
<dbReference type="FunFam" id="3.90.740.10:FF:000005">
    <property type="entry name" value="Valine--tRNA ligase, mitochondrial"/>
    <property type="match status" value="1"/>
</dbReference>
<dbReference type="Gene3D" id="3.40.50.620">
    <property type="entry name" value="HUPs"/>
    <property type="match status" value="2"/>
</dbReference>
<dbReference type="Gene3D" id="1.10.730.10">
    <property type="entry name" value="Isoleucyl-tRNA Synthetase, Domain 1"/>
    <property type="match status" value="1"/>
</dbReference>
<dbReference type="Gene3D" id="1.10.287.380">
    <property type="entry name" value="Valyl-tRNA synthetase, C-terminal domain"/>
    <property type="match status" value="1"/>
</dbReference>
<dbReference type="Gene3D" id="3.90.740.10">
    <property type="entry name" value="Valyl/Leucyl/Isoleucyl-tRNA synthetase, editing domain"/>
    <property type="match status" value="1"/>
</dbReference>
<dbReference type="HAMAP" id="MF_02004">
    <property type="entry name" value="Val_tRNA_synth_type1"/>
    <property type="match status" value="1"/>
</dbReference>
<dbReference type="InterPro" id="IPR001412">
    <property type="entry name" value="aa-tRNA-synth_I_CS"/>
</dbReference>
<dbReference type="InterPro" id="IPR002300">
    <property type="entry name" value="aa-tRNA-synth_Ia"/>
</dbReference>
<dbReference type="InterPro" id="IPR033705">
    <property type="entry name" value="Anticodon_Ia_Val"/>
</dbReference>
<dbReference type="InterPro" id="IPR013155">
    <property type="entry name" value="M/V/L/I-tRNA-synth_anticd-bd"/>
</dbReference>
<dbReference type="InterPro" id="IPR014729">
    <property type="entry name" value="Rossmann-like_a/b/a_fold"/>
</dbReference>
<dbReference type="InterPro" id="IPR010978">
    <property type="entry name" value="tRNA-bd_arm"/>
</dbReference>
<dbReference type="InterPro" id="IPR009080">
    <property type="entry name" value="tRNAsynth_Ia_anticodon-bd"/>
</dbReference>
<dbReference type="InterPro" id="IPR037118">
    <property type="entry name" value="Val-tRNA_synth_C_sf"/>
</dbReference>
<dbReference type="InterPro" id="IPR019499">
    <property type="entry name" value="Val-tRNA_synth_tRNA-bd"/>
</dbReference>
<dbReference type="InterPro" id="IPR009008">
    <property type="entry name" value="Val/Leu/Ile-tRNA-synth_edit"/>
</dbReference>
<dbReference type="InterPro" id="IPR002303">
    <property type="entry name" value="Valyl-tRNA_ligase"/>
</dbReference>
<dbReference type="NCBIfam" id="NF004349">
    <property type="entry name" value="PRK05729.1"/>
    <property type="match status" value="1"/>
</dbReference>
<dbReference type="NCBIfam" id="TIGR00422">
    <property type="entry name" value="valS"/>
    <property type="match status" value="1"/>
</dbReference>
<dbReference type="PANTHER" id="PTHR11946:SF93">
    <property type="entry name" value="VALINE--TRNA LIGASE, CHLOROPLASTIC_MITOCHONDRIAL 2"/>
    <property type="match status" value="1"/>
</dbReference>
<dbReference type="PANTHER" id="PTHR11946">
    <property type="entry name" value="VALYL-TRNA SYNTHETASES"/>
    <property type="match status" value="1"/>
</dbReference>
<dbReference type="Pfam" id="PF08264">
    <property type="entry name" value="Anticodon_1"/>
    <property type="match status" value="1"/>
</dbReference>
<dbReference type="Pfam" id="PF00133">
    <property type="entry name" value="tRNA-synt_1"/>
    <property type="match status" value="1"/>
</dbReference>
<dbReference type="Pfam" id="PF10458">
    <property type="entry name" value="Val_tRNA-synt_C"/>
    <property type="match status" value="1"/>
</dbReference>
<dbReference type="PRINTS" id="PR00986">
    <property type="entry name" value="TRNASYNTHVAL"/>
</dbReference>
<dbReference type="SUPFAM" id="SSF47323">
    <property type="entry name" value="Anticodon-binding domain of a subclass of class I aminoacyl-tRNA synthetases"/>
    <property type="match status" value="1"/>
</dbReference>
<dbReference type="SUPFAM" id="SSF52374">
    <property type="entry name" value="Nucleotidylyl transferase"/>
    <property type="match status" value="1"/>
</dbReference>
<dbReference type="SUPFAM" id="SSF46589">
    <property type="entry name" value="tRNA-binding arm"/>
    <property type="match status" value="1"/>
</dbReference>
<dbReference type="SUPFAM" id="SSF50677">
    <property type="entry name" value="ValRS/IleRS/LeuRS editing domain"/>
    <property type="match status" value="1"/>
</dbReference>
<dbReference type="PROSITE" id="PS00178">
    <property type="entry name" value="AA_TRNA_LIGASE_I"/>
    <property type="match status" value="1"/>
</dbReference>